<dbReference type="ArachnoServer" id="AS000246">
    <property type="toxin name" value="U4-ctenitoxin-Pk1a"/>
</dbReference>
<dbReference type="GO" id="GO:0005576">
    <property type="term" value="C:extracellular region"/>
    <property type="evidence" value="ECO:0007669"/>
    <property type="project" value="UniProtKB-SubCell"/>
</dbReference>
<dbReference type="GO" id="GO:0090729">
    <property type="term" value="F:toxin activity"/>
    <property type="evidence" value="ECO:0007669"/>
    <property type="project" value="UniProtKB-KW"/>
</dbReference>
<dbReference type="InterPro" id="IPR035285">
    <property type="entry name" value="CNTX"/>
</dbReference>
<dbReference type="Pfam" id="PF17492">
    <property type="entry name" value="D_CNTX"/>
    <property type="match status" value="1"/>
</dbReference>
<proteinExistence type="evidence at protein level"/>
<evidence type="ECO:0000269" key="1">
    <source>
    </source>
</evidence>
<evidence type="ECO:0000269" key="2">
    <source ref="2"/>
</evidence>
<evidence type="ECO:0000305" key="3"/>
<accession>P83896</accession>
<protein>
    <recommendedName>
        <fullName>U4-ctenitoxin-Pk1a</fullName>
        <shortName>U4-CNTX-Pk1a</shortName>
    </recommendedName>
    <alternativeName>
        <fullName>Neurotoxin PKTx28C4</fullName>
    </alternativeName>
</protein>
<feature type="peptide" id="PRO_0000044969" description="U4-ctenitoxin-Pk1a">
    <location>
        <begin position="1"/>
        <end position="44" status="greater than"/>
    </location>
</feature>
<feature type="disulfide bond" evidence="3">
    <location>
        <begin position="4"/>
        <end position="18"/>
    </location>
</feature>
<feature type="disulfide bond" evidence="3">
    <location>
        <begin position="11"/>
        <end position="24"/>
    </location>
</feature>
<feature type="disulfide bond" evidence="3">
    <location>
        <begin position="15"/>
        <end position="42"/>
    </location>
</feature>
<feature type="disulfide bond" evidence="3">
    <location>
        <begin position="17"/>
        <end position="33"/>
    </location>
</feature>
<feature type="disulfide bond" evidence="3">
    <location>
        <begin position="26"/>
        <end position="31"/>
    </location>
</feature>
<feature type="non-terminal residue">
    <location>
        <position position="44"/>
    </location>
</feature>
<organism evidence="3">
    <name type="scientific">Phoneutria keyserlingi</name>
    <name type="common">Brazilian wandering spider</name>
    <name type="synonym">Ctenus keyserlingii</name>
    <dbReference type="NCBI Taxonomy" id="272754"/>
    <lineage>
        <taxon>Eukaryota</taxon>
        <taxon>Metazoa</taxon>
        <taxon>Ecdysozoa</taxon>
        <taxon>Arthropoda</taxon>
        <taxon>Chelicerata</taxon>
        <taxon>Arachnida</taxon>
        <taxon>Araneae</taxon>
        <taxon>Araneomorphae</taxon>
        <taxon>Entelegynae</taxon>
        <taxon>Lycosoidea</taxon>
        <taxon>Ctenidae</taxon>
        <taxon>Phoneutria</taxon>
    </lineage>
</organism>
<keyword id="KW-0903">Direct protein sequencing</keyword>
<keyword id="KW-1015">Disulfide bond</keyword>
<keyword id="KW-0960">Knottin</keyword>
<keyword id="KW-0528">Neurotoxin</keyword>
<keyword id="KW-0964">Secreted</keyword>
<keyword id="KW-0800">Toxin</keyword>
<reference key="1">
    <citation type="journal article" date="2006" name="Comp. Biochem. Physiol.">
        <title>Comparison of the partial proteomes of the venoms of Brazilian spiders of the genus Phoneutria.</title>
        <authorList>
            <person name="Richardson M."/>
            <person name="Pimenta A.M."/>
            <person name="Bemquerer M.P."/>
            <person name="Santoro M.M."/>
            <person name="Beirao P.S."/>
            <person name="Lima M.E."/>
            <person name="Figueiredo S.G."/>
            <person name="Bloch C. Jr."/>
            <person name="Vasconcelos E.A."/>
            <person name="Campos F.A."/>
            <person name="Gomes P.C."/>
            <person name="Cordeiro M.N."/>
        </authorList>
    </citation>
    <scope>PROTEIN SEQUENCE</scope>
    <scope>SUBCELLULAR LOCATION</scope>
    <scope>TISSUE SPECIFICITY</scope>
    <scope>MASS SPECTROMETRY</scope>
    <source>
        <tissue>Venom</tissue>
    </source>
</reference>
<reference evidence="3" key="2">
    <citation type="submission" date="2004-04" db="UniProtKB">
        <title>Potent neurotoxin PKTx28C4 from venom of Brazilian wandering spider Phoneutria keyserling.</title>
        <authorList>
            <person name="Richardson M."/>
            <person name="Pimenta A.M.C."/>
            <person name="Bemquerer M.P."/>
            <person name="Santoro M.M."/>
            <person name="Figueiredo S.G."/>
            <person name="Cordeiro M.N."/>
        </authorList>
    </citation>
    <scope>FUNCTION</scope>
</reference>
<comment type="function">
    <text evidence="2 3">Neurotoxin. Causes spastic paralysis and death in mice within 10 minutes at dose levels of 3 ug per mouse.</text>
</comment>
<comment type="subcellular location">
    <subcellularLocation>
        <location evidence="1 3">Secreted</location>
    </subcellularLocation>
</comment>
<comment type="tissue specificity">
    <text evidence="1 3">Expressed by the venom gland.</text>
</comment>
<comment type="domain">
    <text evidence="3">The presence of a 'disulfide through disulfide knot' structurally defines this protein as a knottin.</text>
</comment>
<comment type="mass spectrometry" mass="5001.1" method="Electrospray" evidence="1"/>
<comment type="similarity">
    <text evidence="3">Belongs to the neurotoxin 03 (Tx2) family. 06 subfamily.</text>
</comment>
<name>TX36A_PHOKE</name>
<sequence length="44" mass="4689">KAKCADIDQPCKTSCDCCETKGACTCYKSGCVCRMGSFXATCKK</sequence>